<keyword id="KW-0884">PQQ biosynthesis</keyword>
<keyword id="KW-0813">Transport</keyword>
<gene>
    <name evidence="1" type="primary">pqqB</name>
    <name type="ordered locus">Pput_0404</name>
</gene>
<name>PQQB_PSEP1</name>
<organism>
    <name type="scientific">Pseudomonas putida (strain ATCC 700007 / DSM 6899 / JCM 31910 / BCRC 17059 / LMG 24140 / F1)</name>
    <dbReference type="NCBI Taxonomy" id="351746"/>
    <lineage>
        <taxon>Bacteria</taxon>
        <taxon>Pseudomonadati</taxon>
        <taxon>Pseudomonadota</taxon>
        <taxon>Gammaproteobacteria</taxon>
        <taxon>Pseudomonadales</taxon>
        <taxon>Pseudomonadaceae</taxon>
        <taxon>Pseudomonas</taxon>
    </lineage>
</organism>
<comment type="function">
    <text evidence="1">May be involved in the transport of PQQ or its precursor to the periplasm.</text>
</comment>
<comment type="pathway">
    <text evidence="1">Cofactor biosynthesis; pyrroloquinoline quinone biosynthesis.</text>
</comment>
<comment type="similarity">
    <text evidence="1">Belongs to the PqqB family.</text>
</comment>
<feature type="chain" id="PRO_1000061656" description="Coenzyme PQQ synthesis protein B">
    <location>
        <begin position="1"/>
        <end position="303"/>
    </location>
</feature>
<evidence type="ECO:0000255" key="1">
    <source>
        <dbReference type="HAMAP-Rule" id="MF_00653"/>
    </source>
</evidence>
<proteinExistence type="inferred from homology"/>
<sequence length="303" mass="33274">MYIQVLGSAAGGGFPQWNCNCVNCKGYRDGTLKATARTQSSIALSDDGVHWILCNASPDIRAQLQAFAPMQPARALRDTGINAIVLLDSQIDHTTGLLSLREGCPHQVWCTDMVHQDLTTGFPLFNMLSHWNGGLQWNRIELEGSFVIDACPNLKFTPFPLRSAAPPYSPHRFDPHPGDNLGLMVEDTRTGGKLFYAPGLGQVDEKLLAMMHGADCLLVDGTLWEDDEMQRRGVGTRTGREMGHLAQNGPGGMLEVLDGFPRQRKVLIHINNTNPILDEDSPERAEVLRRGVEVAFDGMSIAL</sequence>
<dbReference type="EMBL" id="CP000712">
    <property type="protein sequence ID" value="ABQ76577.1"/>
    <property type="molecule type" value="Genomic_DNA"/>
</dbReference>
<dbReference type="SMR" id="A5VXG7"/>
<dbReference type="KEGG" id="ppf:Pput_0404"/>
<dbReference type="eggNOG" id="COG1235">
    <property type="taxonomic scope" value="Bacteria"/>
</dbReference>
<dbReference type="HOGENOM" id="CLU_061120_0_0_6"/>
<dbReference type="UniPathway" id="UPA00539"/>
<dbReference type="GO" id="GO:0018189">
    <property type="term" value="P:pyrroloquinoline quinone biosynthetic process"/>
    <property type="evidence" value="ECO:0007669"/>
    <property type="project" value="UniProtKB-UniRule"/>
</dbReference>
<dbReference type="CDD" id="cd16274">
    <property type="entry name" value="PQQB-like_MBL-fold"/>
    <property type="match status" value="1"/>
</dbReference>
<dbReference type="Gene3D" id="3.60.15.10">
    <property type="entry name" value="Ribonuclease Z/Hydroxyacylglutathione hydrolase-like"/>
    <property type="match status" value="1"/>
</dbReference>
<dbReference type="HAMAP" id="MF_00653">
    <property type="entry name" value="PQQ_syn_PqqB"/>
    <property type="match status" value="1"/>
</dbReference>
<dbReference type="InterPro" id="IPR001279">
    <property type="entry name" value="Metallo-B-lactamas"/>
</dbReference>
<dbReference type="InterPro" id="IPR011842">
    <property type="entry name" value="PQQ_synth_PqqB"/>
</dbReference>
<dbReference type="InterPro" id="IPR036866">
    <property type="entry name" value="RibonucZ/Hydroxyglut_hydro"/>
</dbReference>
<dbReference type="NCBIfam" id="TIGR02108">
    <property type="entry name" value="PQQ_syn_pqqB"/>
    <property type="match status" value="1"/>
</dbReference>
<dbReference type="PANTHER" id="PTHR42663:SF7">
    <property type="entry name" value="COENZYME PQQ SYNTHESIS PROTEIN B"/>
    <property type="match status" value="1"/>
</dbReference>
<dbReference type="PANTHER" id="PTHR42663">
    <property type="entry name" value="HYDROLASE C777.06C-RELATED-RELATED"/>
    <property type="match status" value="1"/>
</dbReference>
<dbReference type="Pfam" id="PF12706">
    <property type="entry name" value="Lactamase_B_2"/>
    <property type="match status" value="1"/>
</dbReference>
<dbReference type="SUPFAM" id="SSF56281">
    <property type="entry name" value="Metallo-hydrolase/oxidoreductase"/>
    <property type="match status" value="1"/>
</dbReference>
<protein>
    <recommendedName>
        <fullName evidence="1">Coenzyme PQQ synthesis protein B</fullName>
    </recommendedName>
    <alternativeName>
        <fullName evidence="1">Pyrroloquinoline quinone biosynthesis protein B</fullName>
    </alternativeName>
</protein>
<reference key="1">
    <citation type="submission" date="2007-05" db="EMBL/GenBank/DDBJ databases">
        <title>Complete sequence of Pseudomonas putida F1.</title>
        <authorList>
            <consortium name="US DOE Joint Genome Institute"/>
            <person name="Copeland A."/>
            <person name="Lucas S."/>
            <person name="Lapidus A."/>
            <person name="Barry K."/>
            <person name="Detter J.C."/>
            <person name="Glavina del Rio T."/>
            <person name="Hammon N."/>
            <person name="Israni S."/>
            <person name="Dalin E."/>
            <person name="Tice H."/>
            <person name="Pitluck S."/>
            <person name="Chain P."/>
            <person name="Malfatti S."/>
            <person name="Shin M."/>
            <person name="Vergez L."/>
            <person name="Schmutz J."/>
            <person name="Larimer F."/>
            <person name="Land M."/>
            <person name="Hauser L."/>
            <person name="Kyrpides N."/>
            <person name="Lykidis A."/>
            <person name="Parales R."/>
            <person name="Richardson P."/>
        </authorList>
    </citation>
    <scope>NUCLEOTIDE SEQUENCE [LARGE SCALE GENOMIC DNA]</scope>
    <source>
        <strain>ATCC 700007 / DSM 6899 / JCM 31910 / BCRC 17059 / LMG 24140 / F1</strain>
    </source>
</reference>
<accession>A5VXG7</accession>